<accession>P9WHT1</accession>
<accession>L0T7J1</accession>
<accession>O06634</accession>
<proteinExistence type="evidence at protein level"/>
<protein>
    <recommendedName>
        <fullName>Probable M18 family aminopeptidase 2</fullName>
        <ecNumber>3.4.11.-</ecNumber>
    </recommendedName>
</protein>
<comment type="cofactor">
    <cofactor evidence="1">
        <name>Zn(2+)</name>
        <dbReference type="ChEBI" id="CHEBI:29105"/>
    </cofactor>
</comment>
<comment type="similarity">
    <text evidence="3">Belongs to the peptidase M18 family.</text>
</comment>
<evidence type="ECO:0000250" key="1"/>
<evidence type="ECO:0000255" key="2"/>
<evidence type="ECO:0000305" key="3"/>
<organism>
    <name type="scientific">Mycobacterium tuberculosis (strain ATCC 25618 / H37Rv)</name>
    <dbReference type="NCBI Taxonomy" id="83332"/>
    <lineage>
        <taxon>Bacteria</taxon>
        <taxon>Bacillati</taxon>
        <taxon>Actinomycetota</taxon>
        <taxon>Actinomycetes</taxon>
        <taxon>Mycobacteriales</taxon>
        <taxon>Mycobacteriaceae</taxon>
        <taxon>Mycobacterium</taxon>
        <taxon>Mycobacterium tuberculosis complex</taxon>
    </lineage>
</organism>
<name>APEB_MYCTU</name>
<dbReference type="EC" id="3.4.11.-"/>
<dbReference type="EMBL" id="AL123456">
    <property type="protein sequence ID" value="CCP43548.1"/>
    <property type="molecule type" value="Genomic_DNA"/>
</dbReference>
<dbReference type="PIR" id="A70536">
    <property type="entry name" value="A70536"/>
</dbReference>
<dbReference type="RefSeq" id="NP_215315.1">
    <property type="nucleotide sequence ID" value="NC_000962.3"/>
</dbReference>
<dbReference type="RefSeq" id="WP_003916725.1">
    <property type="nucleotide sequence ID" value="NZ_NVQJ01000064.1"/>
</dbReference>
<dbReference type="SMR" id="P9WHT1"/>
<dbReference type="FunCoup" id="P9WHT1">
    <property type="interactions" value="405"/>
</dbReference>
<dbReference type="STRING" id="83332.Rv0800"/>
<dbReference type="PaxDb" id="83332-Rv0800"/>
<dbReference type="DNASU" id="885461"/>
<dbReference type="GeneID" id="885461"/>
<dbReference type="KEGG" id="mtu:Rv0800"/>
<dbReference type="KEGG" id="mtv:RVBD_0800"/>
<dbReference type="TubercuList" id="Rv0800"/>
<dbReference type="eggNOG" id="COG1362">
    <property type="taxonomic scope" value="Bacteria"/>
</dbReference>
<dbReference type="InParanoid" id="P9WHT1"/>
<dbReference type="OrthoDB" id="5288740at2"/>
<dbReference type="PhylomeDB" id="P9WHT1"/>
<dbReference type="Proteomes" id="UP000001584">
    <property type="component" value="Chromosome"/>
</dbReference>
<dbReference type="GO" id="GO:0005829">
    <property type="term" value="C:cytosol"/>
    <property type="evidence" value="ECO:0007005"/>
    <property type="project" value="MTBBASE"/>
</dbReference>
<dbReference type="GO" id="GO:0005886">
    <property type="term" value="C:plasma membrane"/>
    <property type="evidence" value="ECO:0007005"/>
    <property type="project" value="MTBBASE"/>
</dbReference>
<dbReference type="GO" id="GO:0004177">
    <property type="term" value="F:aminopeptidase activity"/>
    <property type="evidence" value="ECO:0007669"/>
    <property type="project" value="UniProtKB-UniRule"/>
</dbReference>
<dbReference type="GO" id="GO:0008237">
    <property type="term" value="F:metallopeptidase activity"/>
    <property type="evidence" value="ECO:0007669"/>
    <property type="project" value="UniProtKB-UniRule"/>
</dbReference>
<dbReference type="GO" id="GO:0008270">
    <property type="term" value="F:zinc ion binding"/>
    <property type="evidence" value="ECO:0007669"/>
    <property type="project" value="UniProtKB-UniRule"/>
</dbReference>
<dbReference type="GO" id="GO:0006508">
    <property type="term" value="P:proteolysis"/>
    <property type="evidence" value="ECO:0007669"/>
    <property type="project" value="UniProtKB-UniRule"/>
</dbReference>
<dbReference type="CDD" id="cd05658">
    <property type="entry name" value="M18_DAP"/>
    <property type="match status" value="1"/>
</dbReference>
<dbReference type="FunFam" id="2.30.250.10:FF:000004">
    <property type="entry name" value="Probable M18 family aminopeptidase 2"/>
    <property type="match status" value="1"/>
</dbReference>
<dbReference type="Gene3D" id="2.30.250.10">
    <property type="entry name" value="Aminopeptidase i, Domain 2"/>
    <property type="match status" value="1"/>
</dbReference>
<dbReference type="Gene3D" id="3.40.630.10">
    <property type="entry name" value="Zn peptidases"/>
    <property type="match status" value="1"/>
</dbReference>
<dbReference type="HAMAP" id="MF_00467">
    <property type="entry name" value="Aminopeptidase_M18_2"/>
    <property type="match status" value="1"/>
</dbReference>
<dbReference type="InterPro" id="IPR022984">
    <property type="entry name" value="M18_aminopeptidase_2"/>
</dbReference>
<dbReference type="InterPro" id="IPR001948">
    <property type="entry name" value="Peptidase_M18"/>
</dbReference>
<dbReference type="InterPro" id="IPR023358">
    <property type="entry name" value="Peptidase_M18_dom2"/>
</dbReference>
<dbReference type="NCBIfam" id="NF002759">
    <property type="entry name" value="PRK02813.1"/>
    <property type="match status" value="1"/>
</dbReference>
<dbReference type="PANTHER" id="PTHR28570">
    <property type="entry name" value="ASPARTYL AMINOPEPTIDASE"/>
    <property type="match status" value="1"/>
</dbReference>
<dbReference type="PANTHER" id="PTHR28570:SF3">
    <property type="entry name" value="ASPARTYL AMINOPEPTIDASE"/>
    <property type="match status" value="1"/>
</dbReference>
<dbReference type="Pfam" id="PF02127">
    <property type="entry name" value="Peptidase_M18"/>
    <property type="match status" value="1"/>
</dbReference>
<dbReference type="PRINTS" id="PR00932">
    <property type="entry name" value="AMINO1PTASE"/>
</dbReference>
<dbReference type="SUPFAM" id="SSF101821">
    <property type="entry name" value="Aminopeptidase/glucanase lid domain"/>
    <property type="match status" value="1"/>
</dbReference>
<dbReference type="SUPFAM" id="SSF53187">
    <property type="entry name" value="Zn-dependent exopeptidases"/>
    <property type="match status" value="1"/>
</dbReference>
<feature type="chain" id="PRO_0000173464" description="Probable M18 family aminopeptidase 2">
    <location>
        <begin position="1"/>
        <end position="433"/>
    </location>
</feature>
<feature type="binding site" evidence="2">
    <location>
        <position position="79"/>
    </location>
    <ligand>
        <name>Zn(2+)</name>
        <dbReference type="ChEBI" id="CHEBI:29105"/>
    </ligand>
</feature>
<feature type="binding site" evidence="2">
    <location>
        <position position="153"/>
    </location>
    <ligand>
        <name>Zn(2+)</name>
        <dbReference type="ChEBI" id="CHEBI:29105"/>
    </ligand>
</feature>
<feature type="binding site" evidence="2">
    <location>
        <position position="404"/>
    </location>
    <ligand>
        <name>Zn(2+)</name>
        <dbReference type="ChEBI" id="CHEBI:29105"/>
    </ligand>
</feature>
<sequence length="433" mass="46013">MAATAHGLCEFIDASPSPFHVCATVAGRLLGAGYRELREADRWPDKPGRYFTVRAGSLVAWNAEQSGHTQVPFRIVGAHTDSPNLRVKQHPDRLVAGWHVVALQPYGGVWLHSWLDRDLGISGRLSVRDGTGVSHRLVLIDDPILRVPQLAIHLAEDRKSLTLDPQRHINAVWGVGERVESFVGYVAQRAGVAAADVLAADLMTHDLTPSALIGASVNGTASLLSAPRLDNQASCYAGMEALLAVDVDSASSGFVPVLAIFDHEEVGSASGHGAQSDLLSSVLERIVLAAGGTREDFLRRLTTSMLASADMAHATHPNYPDRHEPSHPIEVNAGPVLKVHPNLRYATDGRTAAAFALACQRAGVPMQRYEHRADLPCGSTIGPLAAARTGIPTVDVGAAQLAMHSARELMGAHDVAAYSAALQAFLSAELSEA</sequence>
<reference key="1">
    <citation type="journal article" date="1998" name="Nature">
        <title>Deciphering the biology of Mycobacterium tuberculosis from the complete genome sequence.</title>
        <authorList>
            <person name="Cole S.T."/>
            <person name="Brosch R."/>
            <person name="Parkhill J."/>
            <person name="Garnier T."/>
            <person name="Churcher C.M."/>
            <person name="Harris D.E."/>
            <person name="Gordon S.V."/>
            <person name="Eiglmeier K."/>
            <person name="Gas S."/>
            <person name="Barry C.E. III"/>
            <person name="Tekaia F."/>
            <person name="Badcock K."/>
            <person name="Basham D."/>
            <person name="Brown D."/>
            <person name="Chillingworth T."/>
            <person name="Connor R."/>
            <person name="Davies R.M."/>
            <person name="Devlin K."/>
            <person name="Feltwell T."/>
            <person name="Gentles S."/>
            <person name="Hamlin N."/>
            <person name="Holroyd S."/>
            <person name="Hornsby T."/>
            <person name="Jagels K."/>
            <person name="Krogh A."/>
            <person name="McLean J."/>
            <person name="Moule S."/>
            <person name="Murphy L.D."/>
            <person name="Oliver S."/>
            <person name="Osborne J."/>
            <person name="Quail M.A."/>
            <person name="Rajandream M.A."/>
            <person name="Rogers J."/>
            <person name="Rutter S."/>
            <person name="Seeger K."/>
            <person name="Skelton S."/>
            <person name="Squares S."/>
            <person name="Squares R."/>
            <person name="Sulston J.E."/>
            <person name="Taylor K."/>
            <person name="Whitehead S."/>
            <person name="Barrell B.G."/>
        </authorList>
    </citation>
    <scope>NUCLEOTIDE SEQUENCE [LARGE SCALE GENOMIC DNA]</scope>
    <source>
        <strain>ATCC 25618 / H37Rv</strain>
    </source>
</reference>
<reference key="2">
    <citation type="journal article" date="2011" name="Mol. Cell. Proteomics">
        <title>Proteogenomic analysis of Mycobacterium tuberculosis by high resolution mass spectrometry.</title>
        <authorList>
            <person name="Kelkar D.S."/>
            <person name="Kumar D."/>
            <person name="Kumar P."/>
            <person name="Balakrishnan L."/>
            <person name="Muthusamy B."/>
            <person name="Yadav A.K."/>
            <person name="Shrivastava P."/>
            <person name="Marimuthu A."/>
            <person name="Anand S."/>
            <person name="Sundaram H."/>
            <person name="Kingsbury R."/>
            <person name="Harsha H.C."/>
            <person name="Nair B."/>
            <person name="Prasad T.S."/>
            <person name="Chauhan D.S."/>
            <person name="Katoch K."/>
            <person name="Katoch V.M."/>
            <person name="Kumar P."/>
            <person name="Chaerkady R."/>
            <person name="Ramachandran S."/>
            <person name="Dash D."/>
            <person name="Pandey A."/>
        </authorList>
    </citation>
    <scope>IDENTIFICATION BY MASS SPECTROMETRY [LARGE SCALE ANALYSIS]</scope>
    <source>
        <strain>ATCC 25618 / H37Rv</strain>
    </source>
</reference>
<keyword id="KW-0031">Aminopeptidase</keyword>
<keyword id="KW-0378">Hydrolase</keyword>
<keyword id="KW-0479">Metal-binding</keyword>
<keyword id="KW-0482">Metalloprotease</keyword>
<keyword id="KW-0645">Protease</keyword>
<keyword id="KW-1185">Reference proteome</keyword>
<keyword id="KW-0862">Zinc</keyword>
<gene>
    <name type="primary">apeB</name>
    <name type="synonym">pepC</name>
    <name type="ordered locus">Rv0800</name>
    <name type="ORF">MTCY07H7A.09c</name>
</gene>